<organism>
    <name type="scientific">Pseudomonas entomophila (strain L48)</name>
    <dbReference type="NCBI Taxonomy" id="384676"/>
    <lineage>
        <taxon>Bacteria</taxon>
        <taxon>Pseudomonadati</taxon>
        <taxon>Pseudomonadota</taxon>
        <taxon>Gammaproteobacteria</taxon>
        <taxon>Pseudomonadales</taxon>
        <taxon>Pseudomonadaceae</taxon>
        <taxon>Pseudomonas</taxon>
    </lineage>
</organism>
<protein>
    <recommendedName>
        <fullName evidence="1">Orotidine 5'-phosphate decarboxylase</fullName>
        <ecNumber evidence="1">4.1.1.23</ecNumber>
    </recommendedName>
    <alternativeName>
        <fullName evidence="1">OMP decarboxylase</fullName>
        <shortName evidence="1">OMPDCase</shortName>
        <shortName evidence="1">OMPdecase</shortName>
    </alternativeName>
</protein>
<feature type="chain" id="PRO_1000065934" description="Orotidine 5'-phosphate decarboxylase">
    <location>
        <begin position="1"/>
        <end position="233"/>
    </location>
</feature>
<feature type="active site" description="Proton donor" evidence="1">
    <location>
        <position position="64"/>
    </location>
</feature>
<feature type="binding site" evidence="1">
    <location>
        <position position="13"/>
    </location>
    <ligand>
        <name>substrate</name>
    </ligand>
</feature>
<feature type="binding site" evidence="1">
    <location>
        <position position="35"/>
    </location>
    <ligand>
        <name>substrate</name>
    </ligand>
</feature>
<feature type="binding site" evidence="1">
    <location>
        <begin position="62"/>
        <end position="71"/>
    </location>
    <ligand>
        <name>substrate</name>
    </ligand>
</feature>
<feature type="binding site" evidence="1">
    <location>
        <position position="122"/>
    </location>
    <ligand>
        <name>substrate</name>
    </ligand>
</feature>
<feature type="binding site" evidence="1">
    <location>
        <position position="182"/>
    </location>
    <ligand>
        <name>substrate</name>
    </ligand>
</feature>
<feature type="binding site" evidence="1">
    <location>
        <position position="191"/>
    </location>
    <ligand>
        <name>substrate</name>
    </ligand>
</feature>
<feature type="binding site" evidence="1">
    <location>
        <position position="211"/>
    </location>
    <ligand>
        <name>substrate</name>
    </ligand>
</feature>
<feature type="binding site" evidence="1">
    <location>
        <position position="212"/>
    </location>
    <ligand>
        <name>substrate</name>
    </ligand>
</feature>
<gene>
    <name evidence="1" type="primary">pyrF</name>
    <name type="ordered locus">PSEEN1510</name>
</gene>
<accession>Q1ID82</accession>
<comment type="function">
    <text evidence="1">Catalyzes the decarboxylation of orotidine 5'-monophosphate (OMP) to uridine 5'-monophosphate (UMP).</text>
</comment>
<comment type="catalytic activity">
    <reaction evidence="1">
        <text>orotidine 5'-phosphate + H(+) = UMP + CO2</text>
        <dbReference type="Rhea" id="RHEA:11596"/>
        <dbReference type="ChEBI" id="CHEBI:15378"/>
        <dbReference type="ChEBI" id="CHEBI:16526"/>
        <dbReference type="ChEBI" id="CHEBI:57538"/>
        <dbReference type="ChEBI" id="CHEBI:57865"/>
        <dbReference type="EC" id="4.1.1.23"/>
    </reaction>
</comment>
<comment type="pathway">
    <text evidence="1">Pyrimidine metabolism; UMP biosynthesis via de novo pathway; UMP from orotate: step 2/2.</text>
</comment>
<comment type="subunit">
    <text evidence="1">Homodimer.</text>
</comment>
<comment type="similarity">
    <text evidence="1">Belongs to the OMP decarboxylase family. Type 1 subfamily.</text>
</comment>
<keyword id="KW-0210">Decarboxylase</keyword>
<keyword id="KW-0456">Lyase</keyword>
<keyword id="KW-0665">Pyrimidine biosynthesis</keyword>
<reference key="1">
    <citation type="journal article" date="2006" name="Nat. Biotechnol.">
        <title>Complete genome sequence of the entomopathogenic and metabolically versatile soil bacterium Pseudomonas entomophila.</title>
        <authorList>
            <person name="Vodovar N."/>
            <person name="Vallenet D."/>
            <person name="Cruveiller S."/>
            <person name="Rouy Z."/>
            <person name="Barbe V."/>
            <person name="Acosta C."/>
            <person name="Cattolico L."/>
            <person name="Jubin C."/>
            <person name="Lajus A."/>
            <person name="Segurens B."/>
            <person name="Vacherie B."/>
            <person name="Wincker P."/>
            <person name="Weissenbach J."/>
            <person name="Lemaitre B."/>
            <person name="Medigue C."/>
            <person name="Boccard F."/>
        </authorList>
    </citation>
    <scope>NUCLEOTIDE SEQUENCE [LARGE SCALE GENOMIC DNA]</scope>
    <source>
        <strain>L48</strain>
    </source>
</reference>
<sequence>MSACQTPLIVALDFPTRDAALKLADQLDPALCRVKVGKELFTSSASGIVETLCAKGFEVFLDLKFHDIPNTTAMAVKAAAEMGVWMVNVHCSGGLRMMSACREELAKRSGPQPLLIGVTVLTSMEREDLAGIGLDVDPQVQVLRLAALAQKAGMDGLVCSALEAPALKAAHPSLQLVTPGIRPAGSAQDDQRRILTPRQALDAGSDYLVIGRPISQAADPAKALAAVVAEIRG</sequence>
<name>PYRF_PSEE4</name>
<proteinExistence type="inferred from homology"/>
<dbReference type="EC" id="4.1.1.23" evidence="1"/>
<dbReference type="EMBL" id="CT573326">
    <property type="protein sequence ID" value="CAK14377.1"/>
    <property type="molecule type" value="Genomic_DNA"/>
</dbReference>
<dbReference type="RefSeq" id="WP_011532792.1">
    <property type="nucleotide sequence ID" value="NC_008027.1"/>
</dbReference>
<dbReference type="SMR" id="Q1ID82"/>
<dbReference type="STRING" id="384676.PSEEN1510"/>
<dbReference type="GeneID" id="32804759"/>
<dbReference type="KEGG" id="pen:PSEEN1510"/>
<dbReference type="eggNOG" id="COG0284">
    <property type="taxonomic scope" value="Bacteria"/>
</dbReference>
<dbReference type="HOGENOM" id="CLU_067069_0_0_6"/>
<dbReference type="OrthoDB" id="9806203at2"/>
<dbReference type="UniPathway" id="UPA00070">
    <property type="reaction ID" value="UER00120"/>
</dbReference>
<dbReference type="Proteomes" id="UP000000658">
    <property type="component" value="Chromosome"/>
</dbReference>
<dbReference type="GO" id="GO:0005829">
    <property type="term" value="C:cytosol"/>
    <property type="evidence" value="ECO:0007669"/>
    <property type="project" value="TreeGrafter"/>
</dbReference>
<dbReference type="GO" id="GO:0004590">
    <property type="term" value="F:orotidine-5'-phosphate decarboxylase activity"/>
    <property type="evidence" value="ECO:0007669"/>
    <property type="project" value="UniProtKB-UniRule"/>
</dbReference>
<dbReference type="GO" id="GO:0006207">
    <property type="term" value="P:'de novo' pyrimidine nucleobase biosynthetic process"/>
    <property type="evidence" value="ECO:0007669"/>
    <property type="project" value="InterPro"/>
</dbReference>
<dbReference type="GO" id="GO:0044205">
    <property type="term" value="P:'de novo' UMP biosynthetic process"/>
    <property type="evidence" value="ECO:0007669"/>
    <property type="project" value="UniProtKB-UniRule"/>
</dbReference>
<dbReference type="CDD" id="cd04725">
    <property type="entry name" value="OMP_decarboxylase_like"/>
    <property type="match status" value="1"/>
</dbReference>
<dbReference type="FunFam" id="3.20.20.70:FF:000015">
    <property type="entry name" value="Orotidine 5'-phosphate decarboxylase"/>
    <property type="match status" value="1"/>
</dbReference>
<dbReference type="Gene3D" id="3.20.20.70">
    <property type="entry name" value="Aldolase class I"/>
    <property type="match status" value="1"/>
</dbReference>
<dbReference type="HAMAP" id="MF_01200_B">
    <property type="entry name" value="OMPdecase_type1_B"/>
    <property type="match status" value="1"/>
</dbReference>
<dbReference type="InterPro" id="IPR013785">
    <property type="entry name" value="Aldolase_TIM"/>
</dbReference>
<dbReference type="InterPro" id="IPR014732">
    <property type="entry name" value="OMPdecase"/>
</dbReference>
<dbReference type="InterPro" id="IPR018089">
    <property type="entry name" value="OMPdecase_AS"/>
</dbReference>
<dbReference type="InterPro" id="IPR047596">
    <property type="entry name" value="OMPdecase_bac"/>
</dbReference>
<dbReference type="InterPro" id="IPR001754">
    <property type="entry name" value="OMPdeCOase_dom"/>
</dbReference>
<dbReference type="InterPro" id="IPR011060">
    <property type="entry name" value="RibuloseP-bd_barrel"/>
</dbReference>
<dbReference type="NCBIfam" id="NF001273">
    <property type="entry name" value="PRK00230.1"/>
    <property type="match status" value="1"/>
</dbReference>
<dbReference type="NCBIfam" id="TIGR01740">
    <property type="entry name" value="pyrF"/>
    <property type="match status" value="1"/>
</dbReference>
<dbReference type="PANTHER" id="PTHR32119">
    <property type="entry name" value="OROTIDINE 5'-PHOSPHATE DECARBOXYLASE"/>
    <property type="match status" value="1"/>
</dbReference>
<dbReference type="PANTHER" id="PTHR32119:SF2">
    <property type="entry name" value="OROTIDINE 5'-PHOSPHATE DECARBOXYLASE"/>
    <property type="match status" value="1"/>
</dbReference>
<dbReference type="Pfam" id="PF00215">
    <property type="entry name" value="OMPdecase"/>
    <property type="match status" value="1"/>
</dbReference>
<dbReference type="SMART" id="SM00934">
    <property type="entry name" value="OMPdecase"/>
    <property type="match status" value="1"/>
</dbReference>
<dbReference type="SUPFAM" id="SSF51366">
    <property type="entry name" value="Ribulose-phoshate binding barrel"/>
    <property type="match status" value="1"/>
</dbReference>
<dbReference type="PROSITE" id="PS00156">
    <property type="entry name" value="OMPDECASE"/>
    <property type="match status" value="1"/>
</dbReference>
<evidence type="ECO:0000255" key="1">
    <source>
        <dbReference type="HAMAP-Rule" id="MF_01200"/>
    </source>
</evidence>